<accession>Q8NV63</accession>
<organism>
    <name type="scientific">Staphylococcus aureus (strain MW2)</name>
    <dbReference type="NCBI Taxonomy" id="196620"/>
    <lineage>
        <taxon>Bacteria</taxon>
        <taxon>Bacillati</taxon>
        <taxon>Bacillota</taxon>
        <taxon>Bacilli</taxon>
        <taxon>Bacillales</taxon>
        <taxon>Staphylococcaceae</taxon>
        <taxon>Staphylococcus</taxon>
    </lineage>
</organism>
<reference key="1">
    <citation type="journal article" date="2002" name="Lancet">
        <title>Genome and virulence determinants of high virulence community-acquired MRSA.</title>
        <authorList>
            <person name="Baba T."/>
            <person name="Takeuchi F."/>
            <person name="Kuroda M."/>
            <person name="Yuzawa H."/>
            <person name="Aoki K."/>
            <person name="Oguchi A."/>
            <person name="Nagai Y."/>
            <person name="Iwama N."/>
            <person name="Asano K."/>
            <person name="Naimi T."/>
            <person name="Kuroda H."/>
            <person name="Cui L."/>
            <person name="Yamamoto K."/>
            <person name="Hiramatsu K."/>
        </authorList>
    </citation>
    <scope>NUCLEOTIDE SEQUENCE [LARGE SCALE GENOMIC DNA]</scope>
    <source>
        <strain>MW2</strain>
    </source>
</reference>
<proteinExistence type="inferred from homology"/>
<comment type="function">
    <text evidence="1">Catalyzes the conversion of N-formimidoyl-L-glutamate to L-glutamate and formamide.</text>
</comment>
<comment type="catalytic activity">
    <reaction evidence="1">
        <text>N-formimidoyl-L-glutamate + H2O = formamide + L-glutamate</text>
        <dbReference type="Rhea" id="RHEA:22492"/>
        <dbReference type="ChEBI" id="CHEBI:15377"/>
        <dbReference type="ChEBI" id="CHEBI:16397"/>
        <dbReference type="ChEBI" id="CHEBI:29985"/>
        <dbReference type="ChEBI" id="CHEBI:58928"/>
        <dbReference type="EC" id="3.5.3.8"/>
    </reaction>
</comment>
<comment type="cofactor">
    <cofactor evidence="1">
        <name>Mn(2+)</name>
        <dbReference type="ChEBI" id="CHEBI:29035"/>
    </cofactor>
    <text evidence="1">Binds 2 manganese ions per subunit.</text>
</comment>
<comment type="pathway">
    <text evidence="1">Amino-acid degradation; L-histidine degradation into L-glutamate; L-glutamate from N-formimidoyl-L-glutamate (hydrolase route): step 1/1.</text>
</comment>
<comment type="similarity">
    <text evidence="1">Belongs to the arginase family.</text>
</comment>
<sequence length="311" mass="34523">MYKQGEPNLWTGRLDSETDPKKFRHFQTVTFEDLSKLEKSSMPSGVGILGYAVDKGVALNKGRIGAKEGPDAIKQAFAGLPDLNQCETLVDYGNVYHDHEELIDTQKEFAMLAAKSIANHRQTFLLGGGHDIAYAQYLATRKVYPTQSIGVINIDAHFDTRAEQESTSGTSFRQILEEDDNTDYLVLGIAQGGNTQSLFDYAKEKKIDYVFADELLNHVSPPIKDMIERFVHEHDVIMFTICMDVIDSAFAPGVSAPAVLGLYPHTVLELAKRIIPSDKVSSVSIAEMNPTYDADNRTAKLVANLVHHFLK</sequence>
<gene>
    <name evidence="1" type="primary">hutG</name>
    <name type="ordered locus">MW2254</name>
</gene>
<protein>
    <recommendedName>
        <fullName evidence="1">Formimidoylglutamase</fullName>
        <ecNumber evidence="1">3.5.3.8</ecNumber>
    </recommendedName>
    <alternativeName>
        <fullName evidence="1">Formiminoglutamase</fullName>
    </alternativeName>
    <alternativeName>
        <fullName evidence="1">Formiminoglutamate hydrolase</fullName>
    </alternativeName>
</protein>
<evidence type="ECO:0000255" key="1">
    <source>
        <dbReference type="HAMAP-Rule" id="MF_00737"/>
    </source>
</evidence>
<dbReference type="EC" id="3.5.3.8" evidence="1"/>
<dbReference type="EMBL" id="BA000033">
    <property type="protein sequence ID" value="BAB96119.1"/>
    <property type="molecule type" value="Genomic_DNA"/>
</dbReference>
<dbReference type="RefSeq" id="WP_000277963.1">
    <property type="nucleotide sequence ID" value="NC_003923.1"/>
</dbReference>
<dbReference type="SMR" id="Q8NV63"/>
<dbReference type="KEGG" id="sam:MW2254"/>
<dbReference type="HOGENOM" id="CLU_039478_2_0_9"/>
<dbReference type="UniPathway" id="UPA00379">
    <property type="reaction ID" value="UER00552"/>
</dbReference>
<dbReference type="GO" id="GO:0008783">
    <property type="term" value="F:agmatinase activity"/>
    <property type="evidence" value="ECO:0007669"/>
    <property type="project" value="TreeGrafter"/>
</dbReference>
<dbReference type="GO" id="GO:0050415">
    <property type="term" value="F:formimidoylglutamase activity"/>
    <property type="evidence" value="ECO:0007669"/>
    <property type="project" value="UniProtKB-UniRule"/>
</dbReference>
<dbReference type="GO" id="GO:0030145">
    <property type="term" value="F:manganese ion binding"/>
    <property type="evidence" value="ECO:0007669"/>
    <property type="project" value="UniProtKB-UniRule"/>
</dbReference>
<dbReference type="GO" id="GO:0019556">
    <property type="term" value="P:L-histidine catabolic process to glutamate and formamide"/>
    <property type="evidence" value="ECO:0007669"/>
    <property type="project" value="UniProtKB-UniPathway"/>
</dbReference>
<dbReference type="GO" id="GO:0019557">
    <property type="term" value="P:L-histidine catabolic process to glutamate and formate"/>
    <property type="evidence" value="ECO:0007669"/>
    <property type="project" value="UniProtKB-UniPathway"/>
</dbReference>
<dbReference type="GO" id="GO:0033389">
    <property type="term" value="P:putrescine biosynthetic process from arginine, via agmatine"/>
    <property type="evidence" value="ECO:0007669"/>
    <property type="project" value="TreeGrafter"/>
</dbReference>
<dbReference type="CDD" id="cd09988">
    <property type="entry name" value="Formimidoylglutamase"/>
    <property type="match status" value="1"/>
</dbReference>
<dbReference type="FunFam" id="3.40.800.10:FF:000015">
    <property type="entry name" value="Formimidoylglutamase"/>
    <property type="match status" value="1"/>
</dbReference>
<dbReference type="Gene3D" id="3.40.800.10">
    <property type="entry name" value="Ureohydrolase domain"/>
    <property type="match status" value="1"/>
</dbReference>
<dbReference type="HAMAP" id="MF_00737">
    <property type="entry name" value="Formimidoylglutam"/>
    <property type="match status" value="1"/>
</dbReference>
<dbReference type="InterPro" id="IPR005923">
    <property type="entry name" value="HutG"/>
</dbReference>
<dbReference type="InterPro" id="IPR006035">
    <property type="entry name" value="Ureohydrolase"/>
</dbReference>
<dbReference type="InterPro" id="IPR023696">
    <property type="entry name" value="Ureohydrolase_dom_sf"/>
</dbReference>
<dbReference type="NCBIfam" id="TIGR01227">
    <property type="entry name" value="hutG"/>
    <property type="match status" value="1"/>
</dbReference>
<dbReference type="PANTHER" id="PTHR11358">
    <property type="entry name" value="ARGINASE/AGMATINASE"/>
    <property type="match status" value="1"/>
</dbReference>
<dbReference type="PANTHER" id="PTHR11358:SF35">
    <property type="entry name" value="FORMIMIDOYLGLUTAMASE"/>
    <property type="match status" value="1"/>
</dbReference>
<dbReference type="Pfam" id="PF00491">
    <property type="entry name" value="Arginase"/>
    <property type="match status" value="1"/>
</dbReference>
<dbReference type="PIRSF" id="PIRSF036979">
    <property type="entry name" value="Arginase"/>
    <property type="match status" value="1"/>
</dbReference>
<dbReference type="SUPFAM" id="SSF52768">
    <property type="entry name" value="Arginase/deacetylase"/>
    <property type="match status" value="1"/>
</dbReference>
<dbReference type="PROSITE" id="PS51409">
    <property type="entry name" value="ARGINASE_2"/>
    <property type="match status" value="1"/>
</dbReference>
<name>HUTG_STAAW</name>
<keyword id="KW-0369">Histidine metabolism</keyword>
<keyword id="KW-0378">Hydrolase</keyword>
<keyword id="KW-0464">Manganese</keyword>
<keyword id="KW-0479">Metal-binding</keyword>
<feature type="chain" id="PRO_0000173771" description="Formimidoylglutamase">
    <location>
        <begin position="1"/>
        <end position="311"/>
    </location>
</feature>
<feature type="binding site" evidence="1">
    <location>
        <position position="130"/>
    </location>
    <ligand>
        <name>Mn(2+)</name>
        <dbReference type="ChEBI" id="CHEBI:29035"/>
        <label>1</label>
    </ligand>
</feature>
<feature type="binding site" evidence="1">
    <location>
        <position position="155"/>
    </location>
    <ligand>
        <name>Mn(2+)</name>
        <dbReference type="ChEBI" id="CHEBI:29035"/>
        <label>1</label>
    </ligand>
</feature>
<feature type="binding site" evidence="1">
    <location>
        <position position="155"/>
    </location>
    <ligand>
        <name>Mn(2+)</name>
        <dbReference type="ChEBI" id="CHEBI:29035"/>
        <label>2</label>
    </ligand>
</feature>
<feature type="binding site" evidence="1">
    <location>
        <position position="157"/>
    </location>
    <ligand>
        <name>Mn(2+)</name>
        <dbReference type="ChEBI" id="CHEBI:29035"/>
        <label>2</label>
    </ligand>
</feature>
<feature type="binding site" evidence="1">
    <location>
        <position position="159"/>
    </location>
    <ligand>
        <name>Mn(2+)</name>
        <dbReference type="ChEBI" id="CHEBI:29035"/>
        <label>1</label>
    </ligand>
</feature>
<feature type="binding site" evidence="1">
    <location>
        <position position="242"/>
    </location>
    <ligand>
        <name>Mn(2+)</name>
        <dbReference type="ChEBI" id="CHEBI:29035"/>
        <label>1</label>
    </ligand>
</feature>
<feature type="binding site" evidence="1">
    <location>
        <position position="242"/>
    </location>
    <ligand>
        <name>Mn(2+)</name>
        <dbReference type="ChEBI" id="CHEBI:29035"/>
        <label>2</label>
    </ligand>
</feature>
<feature type="binding site" evidence="1">
    <location>
        <position position="244"/>
    </location>
    <ligand>
        <name>Mn(2+)</name>
        <dbReference type="ChEBI" id="CHEBI:29035"/>
        <label>2</label>
    </ligand>
</feature>